<gene>
    <name evidence="1" type="primary">rpmC</name>
    <name type="ordered locus">EUBREC_0426</name>
</gene>
<feature type="chain" id="PRO_1000205625" description="Large ribosomal subunit protein uL29">
    <location>
        <begin position="1"/>
        <end position="67"/>
    </location>
</feature>
<proteinExistence type="inferred from homology"/>
<organism>
    <name type="scientific">Agathobacter rectalis (strain ATCC 33656 / DSM 3377 / JCM 17463 / KCTC 5835 / VPI 0990)</name>
    <name type="common">Eubacterium rectale</name>
    <dbReference type="NCBI Taxonomy" id="515619"/>
    <lineage>
        <taxon>Bacteria</taxon>
        <taxon>Bacillati</taxon>
        <taxon>Bacillota</taxon>
        <taxon>Clostridia</taxon>
        <taxon>Lachnospirales</taxon>
        <taxon>Lachnospiraceae</taxon>
        <taxon>Agathobacter</taxon>
    </lineage>
</organism>
<accession>C4ZBS7</accession>
<comment type="similarity">
    <text evidence="1">Belongs to the universal ribosomal protein uL29 family.</text>
</comment>
<sequence>MKTSAYVKELQAQSVEQLQAQLVDAKKELFNLRFQNATNQLDNTARIKEVRKNIARIQTVITAKAAE</sequence>
<keyword id="KW-0687">Ribonucleoprotein</keyword>
<keyword id="KW-0689">Ribosomal protein</keyword>
<evidence type="ECO:0000255" key="1">
    <source>
        <dbReference type="HAMAP-Rule" id="MF_00374"/>
    </source>
</evidence>
<evidence type="ECO:0000305" key="2"/>
<name>RL29_AGARV</name>
<protein>
    <recommendedName>
        <fullName evidence="1">Large ribosomal subunit protein uL29</fullName>
    </recommendedName>
    <alternativeName>
        <fullName evidence="2">50S ribosomal protein L29</fullName>
    </alternativeName>
</protein>
<dbReference type="EMBL" id="CP001107">
    <property type="protein sequence ID" value="ACR74217.1"/>
    <property type="molecule type" value="Genomic_DNA"/>
</dbReference>
<dbReference type="RefSeq" id="WP_012741335.1">
    <property type="nucleotide sequence ID" value="NZ_CAXSYD010000003.1"/>
</dbReference>
<dbReference type="SMR" id="C4ZBS7"/>
<dbReference type="STRING" id="515619.EUBREC_0426"/>
<dbReference type="PaxDb" id="515619-EUBREC_0426"/>
<dbReference type="GeneID" id="86987336"/>
<dbReference type="KEGG" id="ere:EUBREC_0426"/>
<dbReference type="HOGENOM" id="CLU_158491_1_0_9"/>
<dbReference type="Proteomes" id="UP000001477">
    <property type="component" value="Chromosome"/>
</dbReference>
<dbReference type="GO" id="GO:0022625">
    <property type="term" value="C:cytosolic large ribosomal subunit"/>
    <property type="evidence" value="ECO:0007669"/>
    <property type="project" value="TreeGrafter"/>
</dbReference>
<dbReference type="GO" id="GO:0003735">
    <property type="term" value="F:structural constituent of ribosome"/>
    <property type="evidence" value="ECO:0007669"/>
    <property type="project" value="InterPro"/>
</dbReference>
<dbReference type="GO" id="GO:0006412">
    <property type="term" value="P:translation"/>
    <property type="evidence" value="ECO:0007669"/>
    <property type="project" value="UniProtKB-UniRule"/>
</dbReference>
<dbReference type="CDD" id="cd00427">
    <property type="entry name" value="Ribosomal_L29_HIP"/>
    <property type="match status" value="1"/>
</dbReference>
<dbReference type="FunFam" id="1.10.287.310:FF:000001">
    <property type="entry name" value="50S ribosomal protein L29"/>
    <property type="match status" value="1"/>
</dbReference>
<dbReference type="Gene3D" id="1.10.287.310">
    <property type="match status" value="1"/>
</dbReference>
<dbReference type="HAMAP" id="MF_00374">
    <property type="entry name" value="Ribosomal_uL29"/>
    <property type="match status" value="1"/>
</dbReference>
<dbReference type="InterPro" id="IPR050063">
    <property type="entry name" value="Ribosomal_protein_uL29"/>
</dbReference>
<dbReference type="InterPro" id="IPR001854">
    <property type="entry name" value="Ribosomal_uL29"/>
</dbReference>
<dbReference type="InterPro" id="IPR018254">
    <property type="entry name" value="Ribosomal_uL29_CS"/>
</dbReference>
<dbReference type="InterPro" id="IPR036049">
    <property type="entry name" value="Ribosomal_uL29_sf"/>
</dbReference>
<dbReference type="NCBIfam" id="TIGR00012">
    <property type="entry name" value="L29"/>
    <property type="match status" value="1"/>
</dbReference>
<dbReference type="PANTHER" id="PTHR10916">
    <property type="entry name" value="60S RIBOSOMAL PROTEIN L35/50S RIBOSOMAL PROTEIN L29"/>
    <property type="match status" value="1"/>
</dbReference>
<dbReference type="PANTHER" id="PTHR10916:SF0">
    <property type="entry name" value="LARGE RIBOSOMAL SUBUNIT PROTEIN UL29C"/>
    <property type="match status" value="1"/>
</dbReference>
<dbReference type="Pfam" id="PF00831">
    <property type="entry name" value="Ribosomal_L29"/>
    <property type="match status" value="1"/>
</dbReference>
<dbReference type="SUPFAM" id="SSF46561">
    <property type="entry name" value="Ribosomal protein L29 (L29p)"/>
    <property type="match status" value="1"/>
</dbReference>
<dbReference type="PROSITE" id="PS00579">
    <property type="entry name" value="RIBOSOMAL_L29"/>
    <property type="match status" value="1"/>
</dbReference>
<reference key="1">
    <citation type="journal article" date="2009" name="Proc. Natl. Acad. Sci. U.S.A.">
        <title>Characterizing a model human gut microbiota composed of members of its two dominant bacterial phyla.</title>
        <authorList>
            <person name="Mahowald M.A."/>
            <person name="Rey F.E."/>
            <person name="Seedorf H."/>
            <person name="Turnbaugh P.J."/>
            <person name="Fulton R.S."/>
            <person name="Wollam A."/>
            <person name="Shah N."/>
            <person name="Wang C."/>
            <person name="Magrini V."/>
            <person name="Wilson R.K."/>
            <person name="Cantarel B.L."/>
            <person name="Coutinho P.M."/>
            <person name="Henrissat B."/>
            <person name="Crock L.W."/>
            <person name="Russell A."/>
            <person name="Verberkmoes N.C."/>
            <person name="Hettich R.L."/>
            <person name="Gordon J.I."/>
        </authorList>
    </citation>
    <scope>NUCLEOTIDE SEQUENCE [LARGE SCALE GENOMIC DNA]</scope>
    <source>
        <strain>ATCC 33656 / DSM 3377 / JCM 17463 / KCTC 5835 / LMG 30912 / VPI 0990</strain>
    </source>
</reference>